<accession>B0VRY3</accession>
<keyword id="KW-0028">Amino-acid biosynthesis</keyword>
<keyword id="KW-0170">Cobalt</keyword>
<keyword id="KW-0220">Diaminopimelate biosynthesis</keyword>
<keyword id="KW-0378">Hydrolase</keyword>
<keyword id="KW-0457">Lysine biosynthesis</keyword>
<keyword id="KW-0479">Metal-binding</keyword>
<keyword id="KW-0862">Zinc</keyword>
<organism>
    <name type="scientific">Acinetobacter baumannii (strain SDF)</name>
    <dbReference type="NCBI Taxonomy" id="509170"/>
    <lineage>
        <taxon>Bacteria</taxon>
        <taxon>Pseudomonadati</taxon>
        <taxon>Pseudomonadota</taxon>
        <taxon>Gammaproteobacteria</taxon>
        <taxon>Moraxellales</taxon>
        <taxon>Moraxellaceae</taxon>
        <taxon>Acinetobacter</taxon>
        <taxon>Acinetobacter calcoaceticus/baumannii complex</taxon>
    </lineage>
</organism>
<sequence length="377" mass="41091">MNHSDTLSLSLELLQQPSVTPIDHTCQTIMADRLAKVGFHIEPMRFGDVDNLWARRGTEGPVFCFAGHTDVVPTGRLDAWNSDPFAPEIRDGKLYGRGSADMKTALAAMVVASERFVAKHPNHKGSIAFLITSDEEGPAVNGTVKVIETLEKRNEKITWCLVGEPSSTHKLGDIVKNGRRGSLNAVLKVQGKQGHVAYPHLARNPIHEASPALAELCQTVWDNGNEYFPATSFQISNIHAGTGATNVIPGTLEVTFNFRYSTEVTAEQLKQRVHEILDKHGLQYEIVWNLSGLPFLTPVGELVNAAQTAILNVTGTETELSTSGGTSDGRFIAPTGAQVLELGVLNATIHQINEHVDVHDLDPLTDIYEQILENLLA</sequence>
<gene>
    <name evidence="1" type="primary">dapE</name>
    <name type="ordered locus">ABSDF0647</name>
</gene>
<name>DAPE_ACIBS</name>
<protein>
    <recommendedName>
        <fullName evidence="1">Succinyl-diaminopimelate desuccinylase</fullName>
        <shortName evidence="1">SDAP desuccinylase</shortName>
        <ecNumber evidence="1">3.5.1.18</ecNumber>
    </recommendedName>
    <alternativeName>
        <fullName evidence="1">N-succinyl-LL-2,6-diaminoheptanedioate amidohydrolase</fullName>
    </alternativeName>
</protein>
<comment type="function">
    <text evidence="1">Catalyzes the hydrolysis of N-succinyl-L,L-diaminopimelic acid (SDAP), forming succinate and LL-2,6-diaminopimelate (DAP), an intermediate involved in the bacterial biosynthesis of lysine and meso-diaminopimelic acid, an essential component of bacterial cell walls.</text>
</comment>
<comment type="catalytic activity">
    <reaction evidence="1">
        <text>N-succinyl-(2S,6S)-2,6-diaminopimelate + H2O = (2S,6S)-2,6-diaminopimelate + succinate</text>
        <dbReference type="Rhea" id="RHEA:22608"/>
        <dbReference type="ChEBI" id="CHEBI:15377"/>
        <dbReference type="ChEBI" id="CHEBI:30031"/>
        <dbReference type="ChEBI" id="CHEBI:57609"/>
        <dbReference type="ChEBI" id="CHEBI:58087"/>
        <dbReference type="EC" id="3.5.1.18"/>
    </reaction>
</comment>
<comment type="cofactor">
    <cofactor evidence="1">
        <name>Zn(2+)</name>
        <dbReference type="ChEBI" id="CHEBI:29105"/>
    </cofactor>
    <cofactor evidence="1">
        <name>Co(2+)</name>
        <dbReference type="ChEBI" id="CHEBI:48828"/>
    </cofactor>
    <text evidence="1">Binds 2 Zn(2+) or Co(2+) ions per subunit.</text>
</comment>
<comment type="pathway">
    <text evidence="1">Amino-acid biosynthesis; L-lysine biosynthesis via DAP pathway; LL-2,6-diaminopimelate from (S)-tetrahydrodipicolinate (succinylase route): step 3/3.</text>
</comment>
<comment type="subunit">
    <text evidence="1">Homodimer.</text>
</comment>
<comment type="similarity">
    <text evidence="1">Belongs to the peptidase M20A family. DapE subfamily.</text>
</comment>
<feature type="chain" id="PRO_0000375447" description="Succinyl-diaminopimelate desuccinylase">
    <location>
        <begin position="1"/>
        <end position="377"/>
    </location>
</feature>
<feature type="active site" evidence="1">
    <location>
        <position position="70"/>
    </location>
</feature>
<feature type="active site" description="Proton acceptor" evidence="1">
    <location>
        <position position="135"/>
    </location>
</feature>
<feature type="binding site" evidence="1">
    <location>
        <position position="68"/>
    </location>
    <ligand>
        <name>Zn(2+)</name>
        <dbReference type="ChEBI" id="CHEBI:29105"/>
        <label>1</label>
    </ligand>
</feature>
<feature type="binding site" evidence="1">
    <location>
        <position position="101"/>
    </location>
    <ligand>
        <name>Zn(2+)</name>
        <dbReference type="ChEBI" id="CHEBI:29105"/>
        <label>1</label>
    </ligand>
</feature>
<feature type="binding site" evidence="1">
    <location>
        <position position="101"/>
    </location>
    <ligand>
        <name>Zn(2+)</name>
        <dbReference type="ChEBI" id="CHEBI:29105"/>
        <label>2</label>
    </ligand>
</feature>
<feature type="binding site" evidence="1">
    <location>
        <position position="136"/>
    </location>
    <ligand>
        <name>Zn(2+)</name>
        <dbReference type="ChEBI" id="CHEBI:29105"/>
        <label>2</label>
    </ligand>
</feature>
<feature type="binding site" evidence="1">
    <location>
        <position position="164"/>
    </location>
    <ligand>
        <name>Zn(2+)</name>
        <dbReference type="ChEBI" id="CHEBI:29105"/>
        <label>1</label>
    </ligand>
</feature>
<feature type="binding site" evidence="1">
    <location>
        <position position="350"/>
    </location>
    <ligand>
        <name>Zn(2+)</name>
        <dbReference type="ChEBI" id="CHEBI:29105"/>
        <label>2</label>
    </ligand>
</feature>
<reference key="1">
    <citation type="journal article" date="2008" name="PLoS ONE">
        <title>Comparative analysis of Acinetobacters: three genomes for three lifestyles.</title>
        <authorList>
            <person name="Vallenet D."/>
            <person name="Nordmann P."/>
            <person name="Barbe V."/>
            <person name="Poirel L."/>
            <person name="Mangenot S."/>
            <person name="Bataille E."/>
            <person name="Dossat C."/>
            <person name="Gas S."/>
            <person name="Kreimeyer A."/>
            <person name="Lenoble P."/>
            <person name="Oztas S."/>
            <person name="Poulain J."/>
            <person name="Segurens B."/>
            <person name="Robert C."/>
            <person name="Abergel C."/>
            <person name="Claverie J.-M."/>
            <person name="Raoult D."/>
            <person name="Medigue C."/>
            <person name="Weissenbach J."/>
            <person name="Cruveiller S."/>
        </authorList>
    </citation>
    <scope>NUCLEOTIDE SEQUENCE [LARGE SCALE GENOMIC DNA]</scope>
    <source>
        <strain>SDF</strain>
    </source>
</reference>
<proteinExistence type="inferred from homology"/>
<evidence type="ECO:0000255" key="1">
    <source>
        <dbReference type="HAMAP-Rule" id="MF_01690"/>
    </source>
</evidence>
<dbReference type="EC" id="3.5.1.18" evidence="1"/>
<dbReference type="EMBL" id="CU468230">
    <property type="protein sequence ID" value="CAP00024.1"/>
    <property type="molecule type" value="Genomic_DNA"/>
</dbReference>
<dbReference type="SMR" id="B0VRY3"/>
<dbReference type="KEGG" id="abm:ABSDF0647"/>
<dbReference type="HOGENOM" id="CLU_021802_4_0_6"/>
<dbReference type="UniPathway" id="UPA00034">
    <property type="reaction ID" value="UER00021"/>
</dbReference>
<dbReference type="Proteomes" id="UP000001741">
    <property type="component" value="Chromosome"/>
</dbReference>
<dbReference type="GO" id="GO:0008777">
    <property type="term" value="F:acetylornithine deacetylase activity"/>
    <property type="evidence" value="ECO:0007669"/>
    <property type="project" value="TreeGrafter"/>
</dbReference>
<dbReference type="GO" id="GO:0050897">
    <property type="term" value="F:cobalt ion binding"/>
    <property type="evidence" value="ECO:0007669"/>
    <property type="project" value="UniProtKB-UniRule"/>
</dbReference>
<dbReference type="GO" id="GO:0009014">
    <property type="term" value="F:succinyl-diaminopimelate desuccinylase activity"/>
    <property type="evidence" value="ECO:0007669"/>
    <property type="project" value="UniProtKB-UniRule"/>
</dbReference>
<dbReference type="GO" id="GO:0008270">
    <property type="term" value="F:zinc ion binding"/>
    <property type="evidence" value="ECO:0007669"/>
    <property type="project" value="UniProtKB-UniRule"/>
</dbReference>
<dbReference type="GO" id="GO:0019877">
    <property type="term" value="P:diaminopimelate biosynthetic process"/>
    <property type="evidence" value="ECO:0007669"/>
    <property type="project" value="UniProtKB-UniRule"/>
</dbReference>
<dbReference type="GO" id="GO:0006526">
    <property type="term" value="P:L-arginine biosynthetic process"/>
    <property type="evidence" value="ECO:0007669"/>
    <property type="project" value="TreeGrafter"/>
</dbReference>
<dbReference type="GO" id="GO:0009089">
    <property type="term" value="P:lysine biosynthetic process via diaminopimelate"/>
    <property type="evidence" value="ECO:0007669"/>
    <property type="project" value="UniProtKB-UniRule"/>
</dbReference>
<dbReference type="CDD" id="cd03891">
    <property type="entry name" value="M20_DapE_proteobac"/>
    <property type="match status" value="1"/>
</dbReference>
<dbReference type="FunFam" id="3.30.70.360:FF:000011">
    <property type="entry name" value="Succinyl-diaminopimelate desuccinylase"/>
    <property type="match status" value="1"/>
</dbReference>
<dbReference type="FunFam" id="3.40.630.10:FF:000005">
    <property type="entry name" value="Succinyl-diaminopimelate desuccinylase"/>
    <property type="match status" value="1"/>
</dbReference>
<dbReference type="Gene3D" id="3.40.630.10">
    <property type="entry name" value="Zn peptidases"/>
    <property type="match status" value="2"/>
</dbReference>
<dbReference type="HAMAP" id="MF_01690">
    <property type="entry name" value="DapE"/>
    <property type="match status" value="1"/>
</dbReference>
<dbReference type="InterPro" id="IPR036264">
    <property type="entry name" value="Bact_exopeptidase_dim_dom"/>
</dbReference>
<dbReference type="InterPro" id="IPR005941">
    <property type="entry name" value="DapE_proteobac"/>
</dbReference>
<dbReference type="InterPro" id="IPR002933">
    <property type="entry name" value="Peptidase_M20"/>
</dbReference>
<dbReference type="InterPro" id="IPR011650">
    <property type="entry name" value="Peptidase_M20_dimer"/>
</dbReference>
<dbReference type="InterPro" id="IPR050072">
    <property type="entry name" value="Peptidase_M20A"/>
</dbReference>
<dbReference type="NCBIfam" id="TIGR01246">
    <property type="entry name" value="dapE_proteo"/>
    <property type="match status" value="1"/>
</dbReference>
<dbReference type="NCBIfam" id="NF009557">
    <property type="entry name" value="PRK13009.1"/>
    <property type="match status" value="1"/>
</dbReference>
<dbReference type="PANTHER" id="PTHR43808">
    <property type="entry name" value="ACETYLORNITHINE DEACETYLASE"/>
    <property type="match status" value="1"/>
</dbReference>
<dbReference type="PANTHER" id="PTHR43808:SF31">
    <property type="entry name" value="N-ACETYL-L-CITRULLINE DEACETYLASE"/>
    <property type="match status" value="1"/>
</dbReference>
<dbReference type="Pfam" id="PF07687">
    <property type="entry name" value="M20_dimer"/>
    <property type="match status" value="1"/>
</dbReference>
<dbReference type="Pfam" id="PF01546">
    <property type="entry name" value="Peptidase_M20"/>
    <property type="match status" value="1"/>
</dbReference>
<dbReference type="SUPFAM" id="SSF55031">
    <property type="entry name" value="Bacterial exopeptidase dimerisation domain"/>
    <property type="match status" value="1"/>
</dbReference>
<dbReference type="SUPFAM" id="SSF53187">
    <property type="entry name" value="Zn-dependent exopeptidases"/>
    <property type="match status" value="1"/>
</dbReference>